<gene>
    <name evidence="11" type="primary">Myo1d</name>
</gene>
<accession>Q5SYD0</accession>
<accession>Q5SSK7</accession>
<accession>Q8BWY5</accession>
<name>MYO1D_MOUSE</name>
<feature type="initiator methionine" description="Removed" evidence="2">
    <location>
        <position position="1"/>
    </location>
</feature>
<feature type="chain" id="PRO_0000123448" description="Unconventional myosin-Id">
    <location>
        <begin position="2"/>
        <end position="1006"/>
    </location>
</feature>
<feature type="domain" description="Myosin motor" evidence="5">
    <location>
        <begin position="9"/>
        <end position="695"/>
    </location>
</feature>
<feature type="domain" description="IQ 1" evidence="4">
    <location>
        <begin position="699"/>
        <end position="719"/>
    </location>
</feature>
<feature type="domain" description="IQ 2" evidence="4">
    <location>
        <begin position="721"/>
        <end position="741"/>
    </location>
</feature>
<feature type="domain" description="TH1" evidence="6">
    <location>
        <begin position="812"/>
        <end position="1005"/>
    </location>
</feature>
<feature type="region of interest" description="Actin-binding" evidence="5">
    <location>
        <begin position="572"/>
        <end position="594"/>
    </location>
</feature>
<feature type="binding site" evidence="5">
    <location>
        <begin position="102"/>
        <end position="109"/>
    </location>
    <ligand>
        <name>ATP</name>
        <dbReference type="ChEBI" id="CHEBI:30616"/>
    </ligand>
</feature>
<feature type="modified residue" description="N-acetylalanine" evidence="2">
    <location>
        <position position="2"/>
    </location>
</feature>
<feature type="modified residue" description="Phosphoserine" evidence="2">
    <location>
        <position position="200"/>
    </location>
</feature>
<feature type="modified residue" description="Phosphotyrosine" evidence="12">
    <location>
        <position position="536"/>
    </location>
</feature>
<feature type="splice variant" id="VSP_051938" description="In isoform 2." evidence="8">
    <original>LTGLSVSNGKDQLVVFHTKDNKDLIVCLFSKQPTHESRIGE</original>
    <variation>ISHAHSSALTLHLLLGRTNFRTMEWLPPLVRQTGYKGGLQM</variation>
    <location>
        <begin position="904"/>
        <end position="944"/>
    </location>
</feature>
<feature type="splice variant" id="VSP_051939" description="In isoform 2." evidence="8">
    <location>
        <begin position="945"/>
        <end position="1006"/>
    </location>
</feature>
<keyword id="KW-0007">Acetylation</keyword>
<keyword id="KW-0009">Actin-binding</keyword>
<keyword id="KW-0025">Alternative splicing</keyword>
<keyword id="KW-0067">ATP-binding</keyword>
<keyword id="KW-0112">Calmodulin-binding</keyword>
<keyword id="KW-1003">Cell membrane</keyword>
<keyword id="KW-0966">Cell projection</keyword>
<keyword id="KW-0963">Cytoplasm</keyword>
<keyword id="KW-0967">Endosome</keyword>
<keyword id="KW-0472">Membrane</keyword>
<keyword id="KW-0505">Motor protein</keyword>
<keyword id="KW-0518">Myosin</keyword>
<keyword id="KW-0547">Nucleotide-binding</keyword>
<keyword id="KW-0597">Phosphoprotein</keyword>
<keyword id="KW-0653">Protein transport</keyword>
<keyword id="KW-1185">Reference proteome</keyword>
<keyword id="KW-0677">Repeat</keyword>
<keyword id="KW-0813">Transport</keyword>
<proteinExistence type="evidence at protein level"/>
<organism>
    <name type="scientific">Mus musculus</name>
    <name type="common">Mouse</name>
    <dbReference type="NCBI Taxonomy" id="10090"/>
    <lineage>
        <taxon>Eukaryota</taxon>
        <taxon>Metazoa</taxon>
        <taxon>Chordata</taxon>
        <taxon>Craniata</taxon>
        <taxon>Vertebrata</taxon>
        <taxon>Euteleostomi</taxon>
        <taxon>Mammalia</taxon>
        <taxon>Eutheria</taxon>
        <taxon>Euarchontoglires</taxon>
        <taxon>Glires</taxon>
        <taxon>Rodentia</taxon>
        <taxon>Myomorpha</taxon>
        <taxon>Muroidea</taxon>
        <taxon>Muridae</taxon>
        <taxon>Murinae</taxon>
        <taxon>Mus</taxon>
        <taxon>Mus</taxon>
    </lineage>
</organism>
<dbReference type="EMBL" id="AK049374">
    <property type="protein sequence ID" value="BAC33719.1"/>
    <property type="status" value="ALT_FRAME"/>
    <property type="molecule type" value="mRNA"/>
</dbReference>
<dbReference type="EMBL" id="AL591146">
    <property type="protein sequence ID" value="CAI24746.1"/>
    <property type="molecule type" value="Genomic_DNA"/>
</dbReference>
<dbReference type="EMBL" id="AL591410">
    <property type="protein sequence ID" value="CAI24746.1"/>
    <property type="status" value="JOINED"/>
    <property type="molecule type" value="Genomic_DNA"/>
</dbReference>
<dbReference type="EMBL" id="AL663054">
    <property type="protein sequence ID" value="CAI24746.1"/>
    <property type="status" value="JOINED"/>
    <property type="molecule type" value="Genomic_DNA"/>
</dbReference>
<dbReference type="EMBL" id="AL591410">
    <property type="protein sequence ID" value="CAI26106.1"/>
    <property type="molecule type" value="Genomic_DNA"/>
</dbReference>
<dbReference type="EMBL" id="AL591146">
    <property type="protein sequence ID" value="CAI26106.1"/>
    <property type="status" value="JOINED"/>
    <property type="molecule type" value="Genomic_DNA"/>
</dbReference>
<dbReference type="EMBL" id="AL663054">
    <property type="protein sequence ID" value="CAI26106.1"/>
    <property type="status" value="JOINED"/>
    <property type="molecule type" value="Genomic_DNA"/>
</dbReference>
<dbReference type="EMBL" id="AL591410">
    <property type="protein sequence ID" value="CAI26107.1"/>
    <property type="molecule type" value="Genomic_DNA"/>
</dbReference>
<dbReference type="EMBL" id="AL663054">
    <property type="protein sequence ID" value="CAI26107.1"/>
    <property type="status" value="JOINED"/>
    <property type="molecule type" value="Genomic_DNA"/>
</dbReference>
<dbReference type="EMBL" id="AL663054">
    <property type="protein sequence ID" value="CAI25852.1"/>
    <property type="molecule type" value="Genomic_DNA"/>
</dbReference>
<dbReference type="EMBL" id="AL591146">
    <property type="protein sequence ID" value="CAI25852.1"/>
    <property type="status" value="JOINED"/>
    <property type="molecule type" value="Genomic_DNA"/>
</dbReference>
<dbReference type="EMBL" id="AL591410">
    <property type="protein sequence ID" value="CAI25852.1"/>
    <property type="status" value="JOINED"/>
    <property type="molecule type" value="Genomic_DNA"/>
</dbReference>
<dbReference type="EMBL" id="AL663054">
    <property type="protein sequence ID" value="CAI25853.1"/>
    <property type="molecule type" value="Genomic_DNA"/>
</dbReference>
<dbReference type="EMBL" id="AL591410">
    <property type="protein sequence ID" value="CAI25853.1"/>
    <property type="status" value="JOINED"/>
    <property type="molecule type" value="Genomic_DNA"/>
</dbReference>
<dbReference type="CCDS" id="CCDS36242.1">
    <molecule id="Q5SYD0-1"/>
</dbReference>
<dbReference type="RefSeq" id="NP_796364.2">
    <molecule id="Q5SYD0-1"/>
    <property type="nucleotide sequence ID" value="NM_177390.3"/>
</dbReference>
<dbReference type="RefSeq" id="XP_006533648.1">
    <molecule id="Q5SYD0-2"/>
    <property type="nucleotide sequence ID" value="XM_006533585.2"/>
</dbReference>
<dbReference type="SMR" id="Q5SYD0"/>
<dbReference type="BioGRID" id="237219">
    <property type="interactions" value="12"/>
</dbReference>
<dbReference type="FunCoup" id="Q5SYD0">
    <property type="interactions" value="1163"/>
</dbReference>
<dbReference type="IntAct" id="Q5SYD0">
    <property type="interactions" value="4"/>
</dbReference>
<dbReference type="MINT" id="Q5SYD0"/>
<dbReference type="STRING" id="10090.ENSMUSP00000037819"/>
<dbReference type="GlyGen" id="Q5SYD0">
    <property type="glycosylation" value="3 sites, 1 N-linked glycan (1 site), 1 O-linked glycan (1 site)"/>
</dbReference>
<dbReference type="iPTMnet" id="Q5SYD0"/>
<dbReference type="PhosphoSitePlus" id="Q5SYD0"/>
<dbReference type="SwissPalm" id="Q5SYD0"/>
<dbReference type="jPOST" id="Q5SYD0"/>
<dbReference type="PaxDb" id="10090-ENSMUSP00000037819"/>
<dbReference type="PeptideAtlas" id="Q5SYD0"/>
<dbReference type="ProteomicsDB" id="287581">
    <molecule id="Q5SYD0-1"/>
</dbReference>
<dbReference type="ProteomicsDB" id="287582">
    <molecule id="Q5SYD0-2"/>
</dbReference>
<dbReference type="Pumba" id="Q5SYD0"/>
<dbReference type="Antibodypedia" id="27274">
    <property type="antibodies" value="105 antibodies from 24 providers"/>
</dbReference>
<dbReference type="DNASU" id="338367"/>
<dbReference type="Ensembl" id="ENSMUST00000041065.14">
    <molecule id="Q5SYD0-1"/>
    <property type="protein sequence ID" value="ENSMUSP00000037819.8"/>
    <property type="gene ID" value="ENSMUSG00000035441.15"/>
</dbReference>
<dbReference type="Ensembl" id="ENSMUST00000070997.6">
    <molecule id="Q5SYD0-2"/>
    <property type="protein sequence ID" value="ENSMUSP00000066948.6"/>
    <property type="gene ID" value="ENSMUSG00000035441.15"/>
</dbReference>
<dbReference type="GeneID" id="338367"/>
<dbReference type="KEGG" id="mmu:338367"/>
<dbReference type="UCSC" id="uc007kmh.1">
    <molecule id="Q5SYD0-1"/>
    <property type="organism name" value="mouse"/>
</dbReference>
<dbReference type="UCSC" id="uc011yau.1">
    <molecule id="Q5SYD0-2"/>
    <property type="organism name" value="mouse"/>
</dbReference>
<dbReference type="AGR" id="MGI:107728"/>
<dbReference type="CTD" id="4642"/>
<dbReference type="MGI" id="MGI:107728">
    <property type="gene designation" value="Myo1d"/>
</dbReference>
<dbReference type="VEuPathDB" id="HostDB:ENSMUSG00000035441"/>
<dbReference type="eggNOG" id="KOG0164">
    <property type="taxonomic scope" value="Eukaryota"/>
</dbReference>
<dbReference type="GeneTree" id="ENSGT00940000157411"/>
<dbReference type="HOGENOM" id="CLU_000192_7_7_1"/>
<dbReference type="InParanoid" id="Q5SYD0"/>
<dbReference type="OMA" id="SSCIEIF"/>
<dbReference type="OrthoDB" id="6108017at2759"/>
<dbReference type="PhylomeDB" id="Q5SYD0"/>
<dbReference type="TreeFam" id="TF312960"/>
<dbReference type="BioGRID-ORCS" id="338367">
    <property type="hits" value="3 hits in 77 CRISPR screens"/>
</dbReference>
<dbReference type="CD-CODE" id="CE726F99">
    <property type="entry name" value="Postsynaptic density"/>
</dbReference>
<dbReference type="ChiTaRS" id="Myo1d">
    <property type="organism name" value="mouse"/>
</dbReference>
<dbReference type="PRO" id="PR:Q5SYD0"/>
<dbReference type="Proteomes" id="UP000000589">
    <property type="component" value="Chromosome 11"/>
</dbReference>
<dbReference type="RNAct" id="Q5SYD0">
    <property type="molecule type" value="protein"/>
</dbReference>
<dbReference type="Bgee" id="ENSMUSG00000035441">
    <property type="expression patterns" value="Expressed in prostate gland ventral lobe and 243 other cell types or tissues"/>
</dbReference>
<dbReference type="GO" id="GO:0097440">
    <property type="term" value="C:apical dendrite"/>
    <property type="evidence" value="ECO:0000250"/>
    <property type="project" value="UniProtKB"/>
</dbReference>
<dbReference type="GO" id="GO:0030424">
    <property type="term" value="C:axon"/>
    <property type="evidence" value="ECO:0000314"/>
    <property type="project" value="UniProtKB"/>
</dbReference>
<dbReference type="GO" id="GO:0016323">
    <property type="term" value="C:basolateral plasma membrane"/>
    <property type="evidence" value="ECO:0000250"/>
    <property type="project" value="UniProtKB"/>
</dbReference>
<dbReference type="GO" id="GO:0005903">
    <property type="term" value="C:brush border"/>
    <property type="evidence" value="ECO:0000314"/>
    <property type="project" value="UniProtKB"/>
</dbReference>
<dbReference type="GO" id="GO:0005938">
    <property type="term" value="C:cell cortex"/>
    <property type="evidence" value="ECO:0007669"/>
    <property type="project" value="UniProtKB-SubCell"/>
</dbReference>
<dbReference type="GO" id="GO:0031410">
    <property type="term" value="C:cytoplasmic vesicle"/>
    <property type="evidence" value="ECO:0000250"/>
    <property type="project" value="UniProtKB"/>
</dbReference>
<dbReference type="GO" id="GO:0005769">
    <property type="term" value="C:early endosome"/>
    <property type="evidence" value="ECO:0007669"/>
    <property type="project" value="UniProtKB-SubCell"/>
</dbReference>
<dbReference type="GO" id="GO:0005768">
    <property type="term" value="C:endosome"/>
    <property type="evidence" value="ECO:0000250"/>
    <property type="project" value="UniProtKB"/>
</dbReference>
<dbReference type="GO" id="GO:0043209">
    <property type="term" value="C:myelin sheath"/>
    <property type="evidence" value="ECO:0000314"/>
    <property type="project" value="UniProtKB"/>
</dbReference>
<dbReference type="GO" id="GO:0016459">
    <property type="term" value="C:myosin complex"/>
    <property type="evidence" value="ECO:0007669"/>
    <property type="project" value="UniProtKB-KW"/>
</dbReference>
<dbReference type="GO" id="GO:0043005">
    <property type="term" value="C:neuron projection"/>
    <property type="evidence" value="ECO:0000314"/>
    <property type="project" value="UniProtKB"/>
</dbReference>
<dbReference type="GO" id="GO:0043025">
    <property type="term" value="C:neuronal cell body"/>
    <property type="evidence" value="ECO:0000314"/>
    <property type="project" value="UniProtKB"/>
</dbReference>
<dbReference type="GO" id="GO:0043204">
    <property type="term" value="C:perikaryon"/>
    <property type="evidence" value="ECO:0007669"/>
    <property type="project" value="UniProtKB-SubCell"/>
</dbReference>
<dbReference type="GO" id="GO:0051015">
    <property type="term" value="F:actin filament binding"/>
    <property type="evidence" value="ECO:0000250"/>
    <property type="project" value="UniProtKB"/>
</dbReference>
<dbReference type="GO" id="GO:0005524">
    <property type="term" value="F:ATP binding"/>
    <property type="evidence" value="ECO:0007669"/>
    <property type="project" value="UniProtKB-KW"/>
</dbReference>
<dbReference type="GO" id="GO:0005516">
    <property type="term" value="F:calmodulin binding"/>
    <property type="evidence" value="ECO:0000250"/>
    <property type="project" value="UniProtKB"/>
</dbReference>
<dbReference type="GO" id="GO:0000146">
    <property type="term" value="F:microfilament motor activity"/>
    <property type="evidence" value="ECO:0000250"/>
    <property type="project" value="UniProtKB"/>
</dbReference>
<dbReference type="GO" id="GO:0019904">
    <property type="term" value="F:protein domain specific binding"/>
    <property type="evidence" value="ECO:0007669"/>
    <property type="project" value="Ensembl"/>
</dbReference>
<dbReference type="GO" id="GO:0051641">
    <property type="term" value="P:cellular localization"/>
    <property type="evidence" value="ECO:0000314"/>
    <property type="project" value="UniProtKB"/>
</dbReference>
<dbReference type="GO" id="GO:0061502">
    <property type="term" value="P:early endosome to recycling endosome transport"/>
    <property type="evidence" value="ECO:0000250"/>
    <property type="project" value="UniProtKB"/>
</dbReference>
<dbReference type="GO" id="GO:0015031">
    <property type="term" value="P:protein transport"/>
    <property type="evidence" value="ECO:0007669"/>
    <property type="project" value="UniProtKB-KW"/>
</dbReference>
<dbReference type="CDD" id="cd01378">
    <property type="entry name" value="MYSc_Myo1"/>
    <property type="match status" value="1"/>
</dbReference>
<dbReference type="FunFam" id="1.20.5.4820:FF:000003">
    <property type="entry name" value="Unconventional myosin ID"/>
    <property type="match status" value="1"/>
</dbReference>
<dbReference type="FunFam" id="1.20.58.530:FF:000004">
    <property type="entry name" value="Unconventional myosin ID"/>
    <property type="match status" value="1"/>
</dbReference>
<dbReference type="FunFam" id="1.20.120.720:FF:000009">
    <property type="entry name" value="Unconventional myosin-Id"/>
    <property type="match status" value="1"/>
</dbReference>
<dbReference type="FunFam" id="1.10.10.820:FF:000007">
    <property type="entry name" value="unconventional myosin-Id"/>
    <property type="match status" value="1"/>
</dbReference>
<dbReference type="Gene3D" id="1.10.10.820">
    <property type="match status" value="1"/>
</dbReference>
<dbReference type="Gene3D" id="1.20.5.4820">
    <property type="match status" value="1"/>
</dbReference>
<dbReference type="Gene3D" id="1.20.58.530">
    <property type="match status" value="1"/>
</dbReference>
<dbReference type="Gene3D" id="3.40.850.10">
    <property type="entry name" value="Kinesin motor domain"/>
    <property type="match status" value="1"/>
</dbReference>
<dbReference type="Gene3D" id="1.20.120.720">
    <property type="entry name" value="Myosin VI head, motor domain, U50 subdomain"/>
    <property type="match status" value="1"/>
</dbReference>
<dbReference type="InterPro" id="IPR000048">
    <property type="entry name" value="IQ_motif_EF-hand-BS"/>
</dbReference>
<dbReference type="InterPro" id="IPR036961">
    <property type="entry name" value="Kinesin_motor_dom_sf"/>
</dbReference>
<dbReference type="InterPro" id="IPR001609">
    <property type="entry name" value="Myosin_head_motor_dom-like"/>
</dbReference>
<dbReference type="InterPro" id="IPR010926">
    <property type="entry name" value="Myosin_TH1"/>
</dbReference>
<dbReference type="InterPro" id="IPR036072">
    <property type="entry name" value="MYSc_Myo1"/>
</dbReference>
<dbReference type="InterPro" id="IPR027417">
    <property type="entry name" value="P-loop_NTPase"/>
</dbReference>
<dbReference type="PANTHER" id="PTHR13140">
    <property type="entry name" value="MYOSIN"/>
    <property type="match status" value="1"/>
</dbReference>
<dbReference type="PANTHER" id="PTHR13140:SF417">
    <property type="entry name" value="UNCONVENTIONAL MYOSIN-ID"/>
    <property type="match status" value="1"/>
</dbReference>
<dbReference type="Pfam" id="PF00612">
    <property type="entry name" value="IQ"/>
    <property type="match status" value="1"/>
</dbReference>
<dbReference type="Pfam" id="PF00063">
    <property type="entry name" value="Myosin_head"/>
    <property type="match status" value="1"/>
</dbReference>
<dbReference type="Pfam" id="PF06017">
    <property type="entry name" value="Myosin_TH1"/>
    <property type="match status" value="1"/>
</dbReference>
<dbReference type="PRINTS" id="PR00193">
    <property type="entry name" value="MYOSINHEAVY"/>
</dbReference>
<dbReference type="SMART" id="SM00015">
    <property type="entry name" value="IQ"/>
    <property type="match status" value="1"/>
</dbReference>
<dbReference type="SMART" id="SM00242">
    <property type="entry name" value="MYSc"/>
    <property type="match status" value="1"/>
</dbReference>
<dbReference type="SUPFAM" id="SSF52540">
    <property type="entry name" value="P-loop containing nucleoside triphosphate hydrolases"/>
    <property type="match status" value="1"/>
</dbReference>
<dbReference type="PROSITE" id="PS50096">
    <property type="entry name" value="IQ"/>
    <property type="match status" value="1"/>
</dbReference>
<dbReference type="PROSITE" id="PS51456">
    <property type="entry name" value="MYOSIN_MOTOR"/>
    <property type="match status" value="1"/>
</dbReference>
<dbReference type="PROSITE" id="PS51757">
    <property type="entry name" value="TH1"/>
    <property type="match status" value="1"/>
</dbReference>
<reference evidence="9 10" key="1">
    <citation type="journal article" date="2005" name="Science">
        <title>The transcriptional landscape of the mammalian genome.</title>
        <authorList>
            <person name="Carninci P."/>
            <person name="Kasukawa T."/>
            <person name="Katayama S."/>
            <person name="Gough J."/>
            <person name="Frith M.C."/>
            <person name="Maeda N."/>
            <person name="Oyama R."/>
            <person name="Ravasi T."/>
            <person name="Lenhard B."/>
            <person name="Wells C."/>
            <person name="Kodzius R."/>
            <person name="Shimokawa K."/>
            <person name="Bajic V.B."/>
            <person name="Brenner S.E."/>
            <person name="Batalov S."/>
            <person name="Forrest A.R."/>
            <person name="Zavolan M."/>
            <person name="Davis M.J."/>
            <person name="Wilming L.G."/>
            <person name="Aidinis V."/>
            <person name="Allen J.E."/>
            <person name="Ambesi-Impiombato A."/>
            <person name="Apweiler R."/>
            <person name="Aturaliya R.N."/>
            <person name="Bailey T.L."/>
            <person name="Bansal M."/>
            <person name="Baxter L."/>
            <person name="Beisel K.W."/>
            <person name="Bersano T."/>
            <person name="Bono H."/>
            <person name="Chalk A.M."/>
            <person name="Chiu K.P."/>
            <person name="Choudhary V."/>
            <person name="Christoffels A."/>
            <person name="Clutterbuck D.R."/>
            <person name="Crowe M.L."/>
            <person name="Dalla E."/>
            <person name="Dalrymple B.P."/>
            <person name="de Bono B."/>
            <person name="Della Gatta G."/>
            <person name="di Bernardo D."/>
            <person name="Down T."/>
            <person name="Engstrom P."/>
            <person name="Fagiolini M."/>
            <person name="Faulkner G."/>
            <person name="Fletcher C.F."/>
            <person name="Fukushima T."/>
            <person name="Furuno M."/>
            <person name="Futaki S."/>
            <person name="Gariboldi M."/>
            <person name="Georgii-Hemming P."/>
            <person name="Gingeras T.R."/>
            <person name="Gojobori T."/>
            <person name="Green R.E."/>
            <person name="Gustincich S."/>
            <person name="Harbers M."/>
            <person name="Hayashi Y."/>
            <person name="Hensch T.K."/>
            <person name="Hirokawa N."/>
            <person name="Hill D."/>
            <person name="Huminiecki L."/>
            <person name="Iacono M."/>
            <person name="Ikeo K."/>
            <person name="Iwama A."/>
            <person name="Ishikawa T."/>
            <person name="Jakt M."/>
            <person name="Kanapin A."/>
            <person name="Katoh M."/>
            <person name="Kawasawa Y."/>
            <person name="Kelso J."/>
            <person name="Kitamura H."/>
            <person name="Kitano H."/>
            <person name="Kollias G."/>
            <person name="Krishnan S.P."/>
            <person name="Kruger A."/>
            <person name="Kummerfeld S.K."/>
            <person name="Kurochkin I.V."/>
            <person name="Lareau L.F."/>
            <person name="Lazarevic D."/>
            <person name="Lipovich L."/>
            <person name="Liu J."/>
            <person name="Liuni S."/>
            <person name="McWilliam S."/>
            <person name="Madan Babu M."/>
            <person name="Madera M."/>
            <person name="Marchionni L."/>
            <person name="Matsuda H."/>
            <person name="Matsuzawa S."/>
            <person name="Miki H."/>
            <person name="Mignone F."/>
            <person name="Miyake S."/>
            <person name="Morris K."/>
            <person name="Mottagui-Tabar S."/>
            <person name="Mulder N."/>
            <person name="Nakano N."/>
            <person name="Nakauchi H."/>
            <person name="Ng P."/>
            <person name="Nilsson R."/>
            <person name="Nishiguchi S."/>
            <person name="Nishikawa S."/>
            <person name="Nori F."/>
            <person name="Ohara O."/>
            <person name="Okazaki Y."/>
            <person name="Orlando V."/>
            <person name="Pang K.C."/>
            <person name="Pavan W.J."/>
            <person name="Pavesi G."/>
            <person name="Pesole G."/>
            <person name="Petrovsky N."/>
            <person name="Piazza S."/>
            <person name="Reed J."/>
            <person name="Reid J.F."/>
            <person name="Ring B.Z."/>
            <person name="Ringwald M."/>
            <person name="Rost B."/>
            <person name="Ruan Y."/>
            <person name="Salzberg S.L."/>
            <person name="Sandelin A."/>
            <person name="Schneider C."/>
            <person name="Schoenbach C."/>
            <person name="Sekiguchi K."/>
            <person name="Semple C.A."/>
            <person name="Seno S."/>
            <person name="Sessa L."/>
            <person name="Sheng Y."/>
            <person name="Shibata Y."/>
            <person name="Shimada H."/>
            <person name="Shimada K."/>
            <person name="Silva D."/>
            <person name="Sinclair B."/>
            <person name="Sperling S."/>
            <person name="Stupka E."/>
            <person name="Sugiura K."/>
            <person name="Sultana R."/>
            <person name="Takenaka Y."/>
            <person name="Taki K."/>
            <person name="Tammoja K."/>
            <person name="Tan S.L."/>
            <person name="Tang S."/>
            <person name="Taylor M.S."/>
            <person name="Tegner J."/>
            <person name="Teichmann S.A."/>
            <person name="Ueda H.R."/>
            <person name="van Nimwegen E."/>
            <person name="Verardo R."/>
            <person name="Wei C.L."/>
            <person name="Yagi K."/>
            <person name="Yamanishi H."/>
            <person name="Zabarovsky E."/>
            <person name="Zhu S."/>
            <person name="Zimmer A."/>
            <person name="Hide W."/>
            <person name="Bult C."/>
            <person name="Grimmond S.M."/>
            <person name="Teasdale R.D."/>
            <person name="Liu E.T."/>
            <person name="Brusic V."/>
            <person name="Quackenbush J."/>
            <person name="Wahlestedt C."/>
            <person name="Mattick J.S."/>
            <person name="Hume D.A."/>
            <person name="Kai C."/>
            <person name="Sasaki D."/>
            <person name="Tomaru Y."/>
            <person name="Fukuda S."/>
            <person name="Kanamori-Katayama M."/>
            <person name="Suzuki M."/>
            <person name="Aoki J."/>
            <person name="Arakawa T."/>
            <person name="Iida J."/>
            <person name="Imamura K."/>
            <person name="Itoh M."/>
            <person name="Kato T."/>
            <person name="Kawaji H."/>
            <person name="Kawagashira N."/>
            <person name="Kawashima T."/>
            <person name="Kojima M."/>
            <person name="Kondo S."/>
            <person name="Konno H."/>
            <person name="Nakano K."/>
            <person name="Ninomiya N."/>
            <person name="Nishio T."/>
            <person name="Okada M."/>
            <person name="Plessy C."/>
            <person name="Shibata K."/>
            <person name="Shiraki T."/>
            <person name="Suzuki S."/>
            <person name="Tagami M."/>
            <person name="Waki K."/>
            <person name="Watahiki A."/>
            <person name="Okamura-Oho Y."/>
            <person name="Suzuki H."/>
            <person name="Kawai J."/>
            <person name="Hayashizaki Y."/>
        </authorList>
    </citation>
    <scope>NUCLEOTIDE SEQUENCE [LARGE SCALE MRNA] (ISOFORM 2)</scope>
    <source>
        <strain evidence="10">C57BL/6J</strain>
        <tissue evidence="10">Embryonic stem cell</tissue>
    </source>
</reference>
<reference key="2">
    <citation type="journal article" date="2009" name="PLoS Biol.">
        <title>Lineage-specific biology revealed by a finished genome assembly of the mouse.</title>
        <authorList>
            <person name="Church D.M."/>
            <person name="Goodstadt L."/>
            <person name="Hillier L.W."/>
            <person name="Zody M.C."/>
            <person name="Goldstein S."/>
            <person name="She X."/>
            <person name="Bult C.J."/>
            <person name="Agarwala R."/>
            <person name="Cherry J.L."/>
            <person name="DiCuccio M."/>
            <person name="Hlavina W."/>
            <person name="Kapustin Y."/>
            <person name="Meric P."/>
            <person name="Maglott D."/>
            <person name="Birtle Z."/>
            <person name="Marques A.C."/>
            <person name="Graves T."/>
            <person name="Zhou S."/>
            <person name="Teague B."/>
            <person name="Potamousis K."/>
            <person name="Churas C."/>
            <person name="Place M."/>
            <person name="Herschleb J."/>
            <person name="Runnheim R."/>
            <person name="Forrest D."/>
            <person name="Amos-Landgraf J."/>
            <person name="Schwartz D.C."/>
            <person name="Cheng Z."/>
            <person name="Lindblad-Toh K."/>
            <person name="Eichler E.E."/>
            <person name="Ponting C.P."/>
        </authorList>
    </citation>
    <scope>NUCLEOTIDE SEQUENCE [LARGE SCALE GENOMIC DNA]</scope>
    <source>
        <strain>C57BL/6J</strain>
    </source>
</reference>
<reference key="3">
    <citation type="journal article" date="2008" name="J. Proteome Res.">
        <title>Large-scale identification and evolution indexing of tyrosine phosphorylation sites from murine brain.</title>
        <authorList>
            <person name="Ballif B.A."/>
            <person name="Carey G.R."/>
            <person name="Sunyaev S.R."/>
            <person name="Gygi S.P."/>
        </authorList>
    </citation>
    <scope>PHOSPHORYLATION [LARGE SCALE ANALYSIS] AT TYR-536</scope>
    <scope>IDENTIFICATION BY MASS SPECTROMETRY [LARGE SCALE ANALYSIS]</scope>
    <source>
        <tissue>Brain</tissue>
    </source>
</reference>
<reference key="4">
    <citation type="journal article" date="2010" name="Cell">
        <title>A tissue-specific atlas of mouse protein phosphorylation and expression.</title>
        <authorList>
            <person name="Huttlin E.L."/>
            <person name="Jedrychowski M.P."/>
            <person name="Elias J.E."/>
            <person name="Goswami T."/>
            <person name="Rad R."/>
            <person name="Beausoleil S.A."/>
            <person name="Villen J."/>
            <person name="Haas W."/>
            <person name="Sowa M.E."/>
            <person name="Gygi S.P."/>
        </authorList>
    </citation>
    <scope>IDENTIFICATION BY MASS SPECTROMETRY [LARGE SCALE ANALYSIS]</scope>
    <source>
        <tissue>Kidney</tissue>
        <tissue>Liver</tissue>
        <tissue>Lung</tissue>
        <tissue>Pancreas</tissue>
        <tissue>Spleen</tissue>
        <tissue>Testis</tissue>
    </source>
</reference>
<reference key="5">
    <citation type="journal article" date="2010" name="Mol. Biol. Cell">
        <title>Differential localization and dynamics of class I myosins in the enterocyte microvillus.</title>
        <authorList>
            <person name="Benesh A.E."/>
            <person name="Nambiar R."/>
            <person name="McConnell R.E."/>
            <person name="Mao S."/>
            <person name="Tabb D.L."/>
            <person name="Tyska M.J."/>
        </authorList>
    </citation>
    <scope>SUBCELLULAR LOCATION</scope>
    <scope>TISSUE SPECIFICITY</scope>
</reference>
<protein>
    <recommendedName>
        <fullName>Unconventional myosin-Id</fullName>
    </recommendedName>
</protein>
<sequence length="1006" mass="116081">MAEQESLEFGKADFVLMDTVSMPEFMANLRLRFEKGRIYTFIGEVVVSVNPYKVLNIYGRDTVEQYKGRELYERPPHLFAIADAAYKAMKRRSKDTCIMISGESGAGKTEASKYIMQYIAAITNPSQRAEIERVKNMLLKSNCVLEAFGNAKTNRNDNSSRFGKYMDINFDFKGDPIGGHINNYLLEKSRVIVQQPGERSFHSFYQLLQGGSEQMLHSLHLQKSLSSYNYIRVGAQLKSSINDAAEFKVVADAMKVIGFKPEEIQTVYKILAVILHLGNLKFIVDGDTPLIENGKVVSVIAELLSTKADMVEKALLYRTVATGRDIIDKQHTEQEASYGRDAFAKAIYERLFCWIVTRINDIIEVKNYDTTIHGKNTVIGVLDIYGFEIFDNNSFEQFCINYCNEKLQQLFIQLVLKQEQEEYQREGIPWKHIDYFNNQIIVDLVEQQHKGIIAILDDACMNVGKVTDGMFLEALNSKLGKHGHFSSRKTCASDKILEFDRDFRIRHYAGDVVYSAIGFIDKNKDTLFQDFKRLMYNSSNPVLKNMWPEGKLSITEVTKRPLTAATLFKNSMIALVDNLASKEPYYVRCIKPNDKKSPQIFDDERCRHQVEYLGLLENVRVRRAGFAFRQTYEKFLHRYKMISEFTWPNHDLPSDKEAVKKLIERCGFQDDVAYGKSKIFIRTPRTLFTLEELRAQMLVRVVLFLQKVWRGTLARMRYKRTKAALTIIRYYRRYKVKSYIHEVARRFHGVKNMRDYGKHVKWPTPPKVLRRFEEALQSIFNRWRASQLIKTIPASDLPQVRAKVAAMEMLKGQRADLGLQRAWEGNYLASKPDTPQTSGTFVPVANELKRKDKYMNVLFSCHVRKVNRFSKVEDRAIFVTDRHLYKMDPTKQYKVMKTIPLYNLTGLSVSNGKDQLVVFHTKDNKDLIVCLFSKQPTHESRIGELVGVLVNHFKSEKRHLQVNVTNPVQCSLHGKKCTVSVETRLNQPQPDFTKNRSGFILSVPGN</sequence>
<comment type="function">
    <text evidence="1 3">Unconventional myosin that functions as actin-based motor protein with ATPase activity (By similarity). Plays a role in endosomal protein trafficking, and especially in the transfer of cargo proteins from early to recycling endosomes (By similarity). Required for normal planar cell polarity in ciliated tracheal cells, for normal rotational polarity of cilia, and for coordinated, unidirectional ciliary movement in the trachea. Required for normal, polarized cilia organization in brain ependymal epithelial cells (By similarity).</text>
</comment>
<comment type="subunit">
    <text evidence="3">Interacts (via the two IQ motifs) with calmodulin. Binds an additional calmodulin chain via a third, C-terminal region. Interacts with F-actin.</text>
</comment>
<comment type="subcellular location">
    <subcellularLocation>
        <location evidence="3">Cytoplasm</location>
    </subcellularLocation>
    <subcellularLocation>
        <location evidence="3">Perikaryon</location>
    </subcellularLocation>
    <subcellularLocation>
        <location evidence="3">Cell projection</location>
        <location evidence="3">Dendrite</location>
    </subcellularLocation>
    <subcellularLocation>
        <location evidence="1">Early endosome</location>
    </subcellularLocation>
    <subcellularLocation>
        <location evidence="7">Cytoplasm</location>
        <location evidence="7">Cell cortex</location>
    </subcellularLocation>
    <subcellularLocation>
        <location evidence="7">Basolateral cell membrane</location>
    </subcellularLocation>
    <text evidence="3 7">Colocalizes with the actin cytoskeleton in the cell cortex close to the basolateral cell membrane (PubMed:20089841). Colocalizes with the actin cytoskeleton in the cell cortex close to the apical cell membrane (PubMed:20089841). Colocalizes with cytoplasmic puncta that are reminiscent of transport vesicles (By similarity).</text>
</comment>
<comment type="alternative products">
    <event type="alternative splicing"/>
    <isoform>
        <id>Q5SYD0-1</id>
        <name>1</name>
        <sequence type="displayed"/>
    </isoform>
    <isoform>
        <id>Q5SYD0-2</id>
        <name evidence="8">2</name>
        <sequence type="described" ref="VSP_051938 VSP_051939"/>
    </isoform>
</comment>
<comment type="tissue specificity">
    <text evidence="7">Detected in enterocytes at the intestinal brush border membrane. Detected at the tip of intestinal microvilli (at protein level).</text>
</comment>
<comment type="domain">
    <text evidence="3">Binds a calmodulin chain via each of the two IQ domains. IQ domain 1 mediates interaction with calmodulin both in the presence and in the absence of Ca(2+). IQ domain 2 mediates interaction with calmodulin in the presence of Ca(2+).</text>
</comment>
<comment type="domain">
    <text evidence="3">The TH1 domain is required for activity in complementing zebrafish defects in Kupffer's vesicle lumen size.</text>
</comment>
<comment type="similarity">
    <text evidence="9">Belongs to the TRAFAC class myosin-kinesin ATPase superfamily. Myosin family.</text>
</comment>
<comment type="caution">
    <text evidence="9">Represents an unconventional myosin. This protein should not be confused with the conventional myosin-1 (MYH1).</text>
</comment>
<comment type="caution">
    <text evidence="3">Contrary to the situation in zebrafish, xenopus and drosophila, mammalian MYO1D defects have no effects on left-right body asymmetry.</text>
</comment>
<comment type="sequence caution" evidence="9">
    <conflict type="frameshift">
        <sequence resource="EMBL-CDS" id="BAC33719"/>
    </conflict>
</comment>
<evidence type="ECO:0000250" key="1">
    <source>
        <dbReference type="UniProtKB" id="F1PRN2"/>
    </source>
</evidence>
<evidence type="ECO:0000250" key="2">
    <source>
        <dbReference type="UniProtKB" id="O94832"/>
    </source>
</evidence>
<evidence type="ECO:0000250" key="3">
    <source>
        <dbReference type="UniProtKB" id="Q63357"/>
    </source>
</evidence>
<evidence type="ECO:0000255" key="4">
    <source>
        <dbReference type="PROSITE-ProRule" id="PRU00116"/>
    </source>
</evidence>
<evidence type="ECO:0000255" key="5">
    <source>
        <dbReference type="PROSITE-ProRule" id="PRU00782"/>
    </source>
</evidence>
<evidence type="ECO:0000255" key="6">
    <source>
        <dbReference type="PROSITE-ProRule" id="PRU01093"/>
    </source>
</evidence>
<evidence type="ECO:0000269" key="7">
    <source>
    </source>
</evidence>
<evidence type="ECO:0000303" key="8">
    <source>
    </source>
</evidence>
<evidence type="ECO:0000305" key="9"/>
<evidence type="ECO:0000312" key="10">
    <source>
        <dbReference type="EMBL" id="BAC33719.1"/>
    </source>
</evidence>
<evidence type="ECO:0000312" key="11">
    <source>
        <dbReference type="EMBL" id="CAI26106.1"/>
    </source>
</evidence>
<evidence type="ECO:0007744" key="12">
    <source>
    </source>
</evidence>